<organism>
    <name type="scientific">Listeria monocytogenes serotype 4a (strain HCC23)</name>
    <dbReference type="NCBI Taxonomy" id="552536"/>
    <lineage>
        <taxon>Bacteria</taxon>
        <taxon>Bacillati</taxon>
        <taxon>Bacillota</taxon>
        <taxon>Bacilli</taxon>
        <taxon>Bacillales</taxon>
        <taxon>Listeriaceae</taxon>
        <taxon>Listeria</taxon>
    </lineage>
</organism>
<protein>
    <recommendedName>
        <fullName evidence="1">Transcription antitermination protein NusB</fullName>
    </recommendedName>
    <alternativeName>
        <fullName evidence="1">Antitermination factor NusB</fullName>
    </alternativeName>
</protein>
<comment type="function">
    <text evidence="1">Involved in transcription antitermination. Required for transcription of ribosomal RNA (rRNA) genes. Binds specifically to the boxA antiterminator sequence of the ribosomal RNA (rrn) operons.</text>
</comment>
<comment type="similarity">
    <text evidence="1">Belongs to the NusB family.</text>
</comment>
<name>NUSB_LISMH</name>
<dbReference type="EMBL" id="CP001175">
    <property type="protein sequence ID" value="ACK39559.1"/>
    <property type="molecule type" value="Genomic_DNA"/>
</dbReference>
<dbReference type="RefSeq" id="WP_012581364.1">
    <property type="nucleotide sequence ID" value="NC_011660.1"/>
</dbReference>
<dbReference type="SMR" id="B8DFW9"/>
<dbReference type="KEGG" id="lmh:LMHCC_1212"/>
<dbReference type="HOGENOM" id="CLU_087843_3_1_9"/>
<dbReference type="GO" id="GO:0005829">
    <property type="term" value="C:cytosol"/>
    <property type="evidence" value="ECO:0007669"/>
    <property type="project" value="TreeGrafter"/>
</dbReference>
<dbReference type="GO" id="GO:0003723">
    <property type="term" value="F:RNA binding"/>
    <property type="evidence" value="ECO:0007669"/>
    <property type="project" value="UniProtKB-UniRule"/>
</dbReference>
<dbReference type="GO" id="GO:0006353">
    <property type="term" value="P:DNA-templated transcription termination"/>
    <property type="evidence" value="ECO:0007669"/>
    <property type="project" value="UniProtKB-UniRule"/>
</dbReference>
<dbReference type="GO" id="GO:0031564">
    <property type="term" value="P:transcription antitermination"/>
    <property type="evidence" value="ECO:0007669"/>
    <property type="project" value="UniProtKB-KW"/>
</dbReference>
<dbReference type="CDD" id="cd00619">
    <property type="entry name" value="Terminator_NusB"/>
    <property type="match status" value="1"/>
</dbReference>
<dbReference type="FunFam" id="1.10.940.10:FF:000003">
    <property type="entry name" value="Transcription antitermination factor NusB"/>
    <property type="match status" value="1"/>
</dbReference>
<dbReference type="Gene3D" id="1.10.940.10">
    <property type="entry name" value="NusB-like"/>
    <property type="match status" value="1"/>
</dbReference>
<dbReference type="HAMAP" id="MF_00073">
    <property type="entry name" value="NusB"/>
    <property type="match status" value="1"/>
</dbReference>
<dbReference type="InterPro" id="IPR035926">
    <property type="entry name" value="NusB-like_sf"/>
</dbReference>
<dbReference type="InterPro" id="IPR011605">
    <property type="entry name" value="NusB_fam"/>
</dbReference>
<dbReference type="InterPro" id="IPR006027">
    <property type="entry name" value="NusB_RsmB_TIM44"/>
</dbReference>
<dbReference type="NCBIfam" id="TIGR01951">
    <property type="entry name" value="nusB"/>
    <property type="match status" value="1"/>
</dbReference>
<dbReference type="NCBIfam" id="NF001223">
    <property type="entry name" value="PRK00202.1-1"/>
    <property type="match status" value="1"/>
</dbReference>
<dbReference type="PANTHER" id="PTHR11078:SF3">
    <property type="entry name" value="ANTITERMINATION NUSB DOMAIN-CONTAINING PROTEIN"/>
    <property type="match status" value="1"/>
</dbReference>
<dbReference type="PANTHER" id="PTHR11078">
    <property type="entry name" value="N UTILIZATION SUBSTANCE PROTEIN B-RELATED"/>
    <property type="match status" value="1"/>
</dbReference>
<dbReference type="Pfam" id="PF01029">
    <property type="entry name" value="NusB"/>
    <property type="match status" value="1"/>
</dbReference>
<dbReference type="SUPFAM" id="SSF48013">
    <property type="entry name" value="NusB-like"/>
    <property type="match status" value="1"/>
</dbReference>
<reference key="1">
    <citation type="journal article" date="2011" name="J. Bacteriol.">
        <title>Genome sequence of lineage III Listeria monocytogenes strain HCC23.</title>
        <authorList>
            <person name="Steele C.L."/>
            <person name="Donaldson J.R."/>
            <person name="Paul D."/>
            <person name="Banes M.M."/>
            <person name="Arick T."/>
            <person name="Bridges S.M."/>
            <person name="Lawrence M.L."/>
        </authorList>
    </citation>
    <scope>NUCLEOTIDE SEQUENCE [LARGE SCALE GENOMIC DNA]</scope>
    <source>
        <strain>HCC23</strain>
    </source>
</reference>
<keyword id="KW-0694">RNA-binding</keyword>
<keyword id="KW-0804">Transcription</keyword>
<keyword id="KW-0889">Transcription antitermination</keyword>
<keyword id="KW-0805">Transcription regulation</keyword>
<feature type="chain" id="PRO_1000192446" description="Transcription antitermination protein NusB">
    <location>
        <begin position="1"/>
        <end position="128"/>
    </location>
</feature>
<sequence>MKRREAREKALQALFQIELNEMSLDQAIKNIMEDEQDDYMEKLVEGVMANKAEIDAIIEPNLDNWRIDRLSKVDLSLLRLSVYEIKYLDDVPNRVSLNESIEIAKIYSDEKSSKFINGVLANIAPEDK</sequence>
<accession>B8DFW9</accession>
<evidence type="ECO:0000255" key="1">
    <source>
        <dbReference type="HAMAP-Rule" id="MF_00073"/>
    </source>
</evidence>
<proteinExistence type="inferred from homology"/>
<gene>
    <name evidence="1" type="primary">nusB</name>
    <name type="ordered locus">LMHCC_1212</name>
</gene>